<sequence>MKRNVLLLPLLIFLLIAAALLWQLARNAQGDDPTNLESALTGKPVPAFRLESLETPGQYYQAEVLTQGKPVLLNVWATWCPTCRAEHQYLNQLSAQGIRVVGLNYKDDRAKAVAWLKELGNPYALSLSDSDGMLGLDLGVYGAPETFLIDGRGIIRYRHAGDLNARVWESELKPLWDRYSREAAQ</sequence>
<dbReference type="EMBL" id="AE006468">
    <property type="protein sequence ID" value="AAL22672.1"/>
    <property type="molecule type" value="Genomic_DNA"/>
</dbReference>
<dbReference type="EMBL" id="AE006468">
    <property type="protein sequence ID" value="AAL21150.1"/>
    <property type="molecule type" value="Genomic_DNA"/>
</dbReference>
<dbReference type="SMR" id="Q8XFK6"/>
<dbReference type="STRING" id="99287.STM2248"/>
<dbReference type="PaxDb" id="99287-STM2248"/>
<dbReference type="KEGG" id="stm:STM2248"/>
<dbReference type="KEGG" id="stm:STM3813"/>
<dbReference type="PATRIC" id="fig|99287.12.peg.2382"/>
<dbReference type="HOGENOM" id="CLU_042529_19_1_6"/>
<dbReference type="OMA" id="KWLAEFH"/>
<dbReference type="PhylomeDB" id="Q8XFK6"/>
<dbReference type="BioCyc" id="SENT99287:STM3813-MONOMER"/>
<dbReference type="Proteomes" id="UP000001014">
    <property type="component" value="Chromosome"/>
</dbReference>
<dbReference type="GO" id="GO:0030288">
    <property type="term" value="C:outer membrane-bounded periplasmic space"/>
    <property type="evidence" value="ECO:0007669"/>
    <property type="project" value="InterPro"/>
</dbReference>
<dbReference type="GO" id="GO:0005886">
    <property type="term" value="C:plasma membrane"/>
    <property type="evidence" value="ECO:0007669"/>
    <property type="project" value="UniProtKB-SubCell"/>
</dbReference>
<dbReference type="GO" id="GO:0015036">
    <property type="term" value="F:disulfide oxidoreductase activity"/>
    <property type="evidence" value="ECO:0007669"/>
    <property type="project" value="InterPro"/>
</dbReference>
<dbReference type="GO" id="GO:0017004">
    <property type="term" value="P:cytochrome complex assembly"/>
    <property type="evidence" value="ECO:0007669"/>
    <property type="project" value="UniProtKB-KW"/>
</dbReference>
<dbReference type="CDD" id="cd03010">
    <property type="entry name" value="TlpA_like_DsbE"/>
    <property type="match status" value="1"/>
</dbReference>
<dbReference type="FunFam" id="3.40.30.10:FF:000040">
    <property type="entry name" value="Thiol:disulfide interchange protein DsbE"/>
    <property type="match status" value="1"/>
</dbReference>
<dbReference type="Gene3D" id="3.40.30.10">
    <property type="entry name" value="Glutaredoxin"/>
    <property type="match status" value="1"/>
</dbReference>
<dbReference type="InterPro" id="IPR004799">
    <property type="entry name" value="Periplasmic_diS_OxRdtase_DsbE"/>
</dbReference>
<dbReference type="InterPro" id="IPR013740">
    <property type="entry name" value="Redoxin"/>
</dbReference>
<dbReference type="InterPro" id="IPR036249">
    <property type="entry name" value="Thioredoxin-like_sf"/>
</dbReference>
<dbReference type="InterPro" id="IPR017937">
    <property type="entry name" value="Thioredoxin_CS"/>
</dbReference>
<dbReference type="InterPro" id="IPR013766">
    <property type="entry name" value="Thioredoxin_domain"/>
</dbReference>
<dbReference type="InterPro" id="IPR050553">
    <property type="entry name" value="Thioredoxin_ResA/DsbE_sf"/>
</dbReference>
<dbReference type="NCBIfam" id="TIGR00385">
    <property type="entry name" value="dsbE"/>
    <property type="match status" value="1"/>
</dbReference>
<dbReference type="NCBIfam" id="NF011941">
    <property type="entry name" value="PRK15412.1"/>
    <property type="match status" value="1"/>
</dbReference>
<dbReference type="PANTHER" id="PTHR42852">
    <property type="entry name" value="THIOL:DISULFIDE INTERCHANGE PROTEIN DSBE"/>
    <property type="match status" value="1"/>
</dbReference>
<dbReference type="PANTHER" id="PTHR42852:SF6">
    <property type="entry name" value="THIOL:DISULFIDE INTERCHANGE PROTEIN DSBE"/>
    <property type="match status" value="1"/>
</dbReference>
<dbReference type="Pfam" id="PF08534">
    <property type="entry name" value="Redoxin"/>
    <property type="match status" value="1"/>
</dbReference>
<dbReference type="SUPFAM" id="SSF52833">
    <property type="entry name" value="Thioredoxin-like"/>
    <property type="match status" value="1"/>
</dbReference>
<dbReference type="PROSITE" id="PS00194">
    <property type="entry name" value="THIOREDOXIN_1"/>
    <property type="match status" value="1"/>
</dbReference>
<dbReference type="PROSITE" id="PS51352">
    <property type="entry name" value="THIOREDOXIN_2"/>
    <property type="match status" value="1"/>
</dbReference>
<reference key="1">
    <citation type="journal article" date="2001" name="Nature">
        <title>Complete genome sequence of Salmonella enterica serovar Typhimurium LT2.</title>
        <authorList>
            <person name="McClelland M."/>
            <person name="Sanderson K.E."/>
            <person name="Spieth J."/>
            <person name="Clifton S.W."/>
            <person name="Latreille P."/>
            <person name="Courtney L."/>
            <person name="Porwollik S."/>
            <person name="Ali J."/>
            <person name="Dante M."/>
            <person name="Du F."/>
            <person name="Hou S."/>
            <person name="Layman D."/>
            <person name="Leonard S."/>
            <person name="Nguyen C."/>
            <person name="Scott K."/>
            <person name="Holmes A."/>
            <person name="Grewal N."/>
            <person name="Mulvaney E."/>
            <person name="Ryan E."/>
            <person name="Sun H."/>
            <person name="Florea L."/>
            <person name="Miller W."/>
            <person name="Stoneking T."/>
            <person name="Nhan M."/>
            <person name="Waterston R."/>
            <person name="Wilson R.K."/>
        </authorList>
    </citation>
    <scope>NUCLEOTIDE SEQUENCE [LARGE SCALE GENOMIC DNA]</scope>
    <source>
        <strain>LT2 / SGSC1412 / ATCC 700720</strain>
    </source>
</reference>
<gene>
    <name type="primary">dsbE1</name>
    <name type="synonym">ccmG1</name>
    <name type="ordered locus">STM2248</name>
</gene>
<gene>
    <name type="primary">dsbE2</name>
    <name type="synonym">ccmG2</name>
    <name type="ordered locus">STM3813</name>
</gene>
<organism>
    <name type="scientific">Salmonella typhimurium (strain LT2 / SGSC1412 / ATCC 700720)</name>
    <dbReference type="NCBI Taxonomy" id="99287"/>
    <lineage>
        <taxon>Bacteria</taxon>
        <taxon>Pseudomonadati</taxon>
        <taxon>Pseudomonadota</taxon>
        <taxon>Gammaproteobacteria</taxon>
        <taxon>Enterobacterales</taxon>
        <taxon>Enterobacteriaceae</taxon>
        <taxon>Salmonella</taxon>
    </lineage>
</organism>
<feature type="chain" id="PRO_0000201301" description="Thiol:disulfide interchange protein DsbE">
    <location>
        <begin position="1"/>
        <end position="185"/>
    </location>
</feature>
<feature type="topological domain" description="Cytoplasmic" evidence="2">
    <location>
        <begin position="1"/>
        <end position="4"/>
    </location>
</feature>
<feature type="transmembrane region" description="Helical" evidence="2">
    <location>
        <begin position="5"/>
        <end position="25"/>
    </location>
</feature>
<feature type="topological domain" description="Periplasmic" evidence="2">
    <location>
        <begin position="26"/>
        <end position="185"/>
    </location>
</feature>
<feature type="domain" description="Thioredoxin" evidence="3">
    <location>
        <begin position="39"/>
        <end position="177"/>
    </location>
</feature>
<feature type="disulfide bond" description="Redox-active" evidence="3">
    <location>
        <begin position="80"/>
        <end position="83"/>
    </location>
</feature>
<keyword id="KW-0997">Cell inner membrane</keyword>
<keyword id="KW-1003">Cell membrane</keyword>
<keyword id="KW-0201">Cytochrome c-type biogenesis</keyword>
<keyword id="KW-1015">Disulfide bond</keyword>
<keyword id="KW-0472">Membrane</keyword>
<keyword id="KW-0676">Redox-active center</keyword>
<keyword id="KW-1185">Reference proteome</keyword>
<keyword id="KW-0812">Transmembrane</keyword>
<keyword id="KW-1133">Transmembrane helix</keyword>
<comment type="function">
    <text evidence="1">Involved in disulfide bond formation. Catalyzes a late, reductive step in the assembly of periplasmic c-type cytochromes, probably the reduction of disulfide bonds of the apocytochrome c to allow covalent linkage with the heme. Possible subunit of a heme lyase (By similarity).</text>
</comment>
<comment type="subcellular location">
    <subcellularLocation>
        <location evidence="1">Cell inner membrane</location>
        <topology evidence="1">Single-pass membrane protein</topology>
        <orientation evidence="1">Periplasmic side</orientation>
    </subcellularLocation>
</comment>
<comment type="similarity">
    <text evidence="4">Belongs to the thioredoxin family. DsbE subfamily.</text>
</comment>
<name>DSBE_SALTY</name>
<proteinExistence type="inferred from homology"/>
<evidence type="ECO:0000250" key="1"/>
<evidence type="ECO:0000255" key="2"/>
<evidence type="ECO:0000255" key="3">
    <source>
        <dbReference type="PROSITE-ProRule" id="PRU00691"/>
    </source>
</evidence>
<evidence type="ECO:0000305" key="4"/>
<protein>
    <recommendedName>
        <fullName>Thiol:disulfide interchange protein DsbE</fullName>
    </recommendedName>
    <alternativeName>
        <fullName>Cytochrome c biogenesis protein CcmG</fullName>
    </alternativeName>
</protein>
<accession>Q8XFK6</accession>